<accession>B7LYZ3</accession>
<proteinExistence type="inferred from homology"/>
<sequence length="359" mass="40139">MKKYLALALIAPLLISCSTTKKGDTYNEAWVKDTNGFDILMGQFAHNIENIWGFKEVVIAGPKDYVKYTDQYQTRSHINFDDGTITIETIAGTEPAAHLRRAIIKTLLMGDDPSSVDLYSDVDDITISKEPFLYGQVVDNTGQPIRWEGRASNFADYLLKNRLQSRNNGLRIIYSVTINMVPNHLDKRAHKYLGMVRQASRKYGVDESLILAIMQTESSFNPYAVSRSDALGLMQVVQHTAGKDVFRSQGKSGTPSRSFLFDPASNIDTGTAYLAMLNNVYLGGIDNPTSRRYAVITAYNGGAGSVLRVFSNDKIQAANIINTMTPGDVYQTLTTRHPSAESRRYLYKVNTAQKSYRRR</sequence>
<feature type="signal peptide" evidence="1">
    <location>
        <begin position="1"/>
        <end position="16"/>
    </location>
</feature>
<feature type="chain" id="PRO_1000185923" description="Membrane-bound lytic murein transglycosylase C">
    <location>
        <begin position="17"/>
        <end position="359"/>
    </location>
</feature>
<feature type="lipid moiety-binding region" description="N-palmitoyl cysteine" evidence="1">
    <location>
        <position position="17"/>
    </location>
</feature>
<feature type="lipid moiety-binding region" description="S-diacylglycerol cysteine" evidence="1">
    <location>
        <position position="17"/>
    </location>
</feature>
<comment type="function">
    <text evidence="1">Murein-degrading enzyme. May play a role in recycling of muropeptides during cell elongation and/or cell division.</text>
</comment>
<comment type="catalytic activity">
    <reaction evidence="1">
        <text>Exolytic cleavage of the (1-&gt;4)-beta-glycosidic linkage between N-acetylmuramic acid (MurNAc) and N-acetylglucosamine (GlcNAc) residues in peptidoglycan, from either the reducing or the non-reducing ends of the peptidoglycan chains, with concomitant formation of a 1,6-anhydrobond in the MurNAc residue.</text>
        <dbReference type="EC" id="4.2.2.n1"/>
    </reaction>
</comment>
<comment type="subcellular location">
    <subcellularLocation>
        <location evidence="1">Cell outer membrane</location>
        <topology evidence="1">Lipid-anchor</topology>
    </subcellularLocation>
</comment>
<comment type="similarity">
    <text evidence="1">Belongs to the transglycosylase Slt family.</text>
</comment>
<keyword id="KW-0998">Cell outer membrane</keyword>
<keyword id="KW-0961">Cell wall biogenesis/degradation</keyword>
<keyword id="KW-0449">Lipoprotein</keyword>
<keyword id="KW-0456">Lyase</keyword>
<keyword id="KW-0472">Membrane</keyword>
<keyword id="KW-0564">Palmitate</keyword>
<keyword id="KW-0732">Signal</keyword>
<reference key="1">
    <citation type="journal article" date="2009" name="PLoS Genet.">
        <title>Organised genome dynamics in the Escherichia coli species results in highly diverse adaptive paths.</title>
        <authorList>
            <person name="Touchon M."/>
            <person name="Hoede C."/>
            <person name="Tenaillon O."/>
            <person name="Barbe V."/>
            <person name="Baeriswyl S."/>
            <person name="Bidet P."/>
            <person name="Bingen E."/>
            <person name="Bonacorsi S."/>
            <person name="Bouchier C."/>
            <person name="Bouvet O."/>
            <person name="Calteau A."/>
            <person name="Chiapello H."/>
            <person name="Clermont O."/>
            <person name="Cruveiller S."/>
            <person name="Danchin A."/>
            <person name="Diard M."/>
            <person name="Dossat C."/>
            <person name="Karoui M.E."/>
            <person name="Frapy E."/>
            <person name="Garry L."/>
            <person name="Ghigo J.M."/>
            <person name="Gilles A.M."/>
            <person name="Johnson J."/>
            <person name="Le Bouguenec C."/>
            <person name="Lescat M."/>
            <person name="Mangenot S."/>
            <person name="Martinez-Jehanne V."/>
            <person name="Matic I."/>
            <person name="Nassif X."/>
            <person name="Oztas S."/>
            <person name="Petit M.A."/>
            <person name="Pichon C."/>
            <person name="Rouy Z."/>
            <person name="Ruf C.S."/>
            <person name="Schneider D."/>
            <person name="Tourret J."/>
            <person name="Vacherie B."/>
            <person name="Vallenet D."/>
            <person name="Medigue C."/>
            <person name="Rocha E.P.C."/>
            <person name="Denamur E."/>
        </authorList>
    </citation>
    <scope>NUCLEOTIDE SEQUENCE [LARGE SCALE GENOMIC DNA]</scope>
    <source>
        <strain>IAI1</strain>
    </source>
</reference>
<organism>
    <name type="scientific">Escherichia coli O8 (strain IAI1)</name>
    <dbReference type="NCBI Taxonomy" id="585034"/>
    <lineage>
        <taxon>Bacteria</taxon>
        <taxon>Pseudomonadati</taxon>
        <taxon>Pseudomonadota</taxon>
        <taxon>Gammaproteobacteria</taxon>
        <taxon>Enterobacterales</taxon>
        <taxon>Enterobacteriaceae</taxon>
        <taxon>Escherichia</taxon>
    </lineage>
</organism>
<protein>
    <recommendedName>
        <fullName evidence="1">Membrane-bound lytic murein transglycosylase C</fullName>
        <ecNumber evidence="1">4.2.2.n1</ecNumber>
    </recommendedName>
    <alternativeName>
        <fullName evidence="1">Murein lyase C</fullName>
    </alternativeName>
</protein>
<dbReference type="EC" id="4.2.2.n1" evidence="1"/>
<dbReference type="EMBL" id="CU928160">
    <property type="protein sequence ID" value="CAQ99911.1"/>
    <property type="molecule type" value="Genomic_DNA"/>
</dbReference>
<dbReference type="RefSeq" id="WP_001365878.1">
    <property type="nucleotide sequence ID" value="NC_011741.1"/>
</dbReference>
<dbReference type="SMR" id="B7LYZ3"/>
<dbReference type="CAZy" id="GH23">
    <property type="family name" value="Glycoside Hydrolase Family 23"/>
</dbReference>
<dbReference type="KEGG" id="ecr:ECIAI1_3096"/>
<dbReference type="HOGENOM" id="CLU_044583_0_0_6"/>
<dbReference type="GO" id="GO:0009279">
    <property type="term" value="C:cell outer membrane"/>
    <property type="evidence" value="ECO:0007669"/>
    <property type="project" value="UniProtKB-SubCell"/>
</dbReference>
<dbReference type="GO" id="GO:0016798">
    <property type="term" value="F:hydrolase activity, acting on glycosyl bonds"/>
    <property type="evidence" value="ECO:0007669"/>
    <property type="project" value="InterPro"/>
</dbReference>
<dbReference type="GO" id="GO:0008933">
    <property type="term" value="F:peptidoglycan lytic transglycosylase activity"/>
    <property type="evidence" value="ECO:0007669"/>
    <property type="project" value="UniProtKB-UniRule"/>
</dbReference>
<dbReference type="GO" id="GO:0016998">
    <property type="term" value="P:cell wall macromolecule catabolic process"/>
    <property type="evidence" value="ECO:0007669"/>
    <property type="project" value="UniProtKB-UniRule"/>
</dbReference>
<dbReference type="GO" id="GO:0071555">
    <property type="term" value="P:cell wall organization"/>
    <property type="evidence" value="ECO:0007669"/>
    <property type="project" value="UniProtKB-KW"/>
</dbReference>
<dbReference type="GO" id="GO:0000270">
    <property type="term" value="P:peptidoglycan metabolic process"/>
    <property type="evidence" value="ECO:0007669"/>
    <property type="project" value="InterPro"/>
</dbReference>
<dbReference type="CDD" id="cd16893">
    <property type="entry name" value="LT_MltC_MltE"/>
    <property type="match status" value="1"/>
</dbReference>
<dbReference type="FunFam" id="1.10.530.10:FF:000002">
    <property type="entry name" value="Membrane-bound lytic murein transglycosylase C"/>
    <property type="match status" value="1"/>
</dbReference>
<dbReference type="Gene3D" id="1.10.530.10">
    <property type="match status" value="1"/>
</dbReference>
<dbReference type="HAMAP" id="MF_01616">
    <property type="entry name" value="MltC"/>
    <property type="match status" value="1"/>
</dbReference>
<dbReference type="InterPro" id="IPR023346">
    <property type="entry name" value="Lysozyme-like_dom_sf"/>
</dbReference>
<dbReference type="InterPro" id="IPR023664">
    <property type="entry name" value="Murein_transglycosylaseC"/>
</dbReference>
<dbReference type="InterPro" id="IPR024570">
    <property type="entry name" value="Murein_transglycosylaseC_N"/>
</dbReference>
<dbReference type="InterPro" id="IPR000189">
    <property type="entry name" value="Transglyc_AS"/>
</dbReference>
<dbReference type="InterPro" id="IPR008258">
    <property type="entry name" value="Transglycosylase_SLT_dom_1"/>
</dbReference>
<dbReference type="NCBIfam" id="NF008670">
    <property type="entry name" value="PRK11671.1"/>
    <property type="match status" value="1"/>
</dbReference>
<dbReference type="PANTHER" id="PTHR37423:SF2">
    <property type="entry name" value="MEMBRANE-BOUND LYTIC MUREIN TRANSGLYCOSYLASE C"/>
    <property type="match status" value="1"/>
</dbReference>
<dbReference type="PANTHER" id="PTHR37423">
    <property type="entry name" value="SOLUBLE LYTIC MUREIN TRANSGLYCOSYLASE-RELATED"/>
    <property type="match status" value="1"/>
</dbReference>
<dbReference type="Pfam" id="PF11873">
    <property type="entry name" value="Mltc_N"/>
    <property type="match status" value="1"/>
</dbReference>
<dbReference type="Pfam" id="PF01464">
    <property type="entry name" value="SLT"/>
    <property type="match status" value="1"/>
</dbReference>
<dbReference type="SUPFAM" id="SSF53955">
    <property type="entry name" value="Lysozyme-like"/>
    <property type="match status" value="1"/>
</dbReference>
<dbReference type="PROSITE" id="PS51257">
    <property type="entry name" value="PROKAR_LIPOPROTEIN"/>
    <property type="match status" value="1"/>
</dbReference>
<dbReference type="PROSITE" id="PS00922">
    <property type="entry name" value="TRANSGLYCOSYLASE"/>
    <property type="match status" value="1"/>
</dbReference>
<gene>
    <name evidence="1" type="primary">mltC</name>
    <name type="ordered locus">ECIAI1_3096</name>
</gene>
<evidence type="ECO:0000255" key="1">
    <source>
        <dbReference type="HAMAP-Rule" id="MF_01616"/>
    </source>
</evidence>
<name>MLTC_ECO8A</name>